<dbReference type="EC" id="2.3.2.26" evidence="1"/>
<dbReference type="EMBL" id="BX284601">
    <property type="protein sequence ID" value="CCD71932.1"/>
    <property type="molecule type" value="Genomic_DNA"/>
</dbReference>
<dbReference type="EMBL" id="BX284601">
    <property type="protein sequence ID" value="CCD71931.1"/>
    <property type="molecule type" value="Genomic_DNA"/>
</dbReference>
<dbReference type="EMBL" id="BX284601">
    <property type="protein sequence ID" value="CDK13616.1"/>
    <property type="molecule type" value="Genomic_DNA"/>
</dbReference>
<dbReference type="EMBL" id="BX284601">
    <property type="protein sequence ID" value="CDK13617.1"/>
    <property type="molecule type" value="Genomic_DNA"/>
</dbReference>
<dbReference type="RefSeq" id="NP_001293271.1">
    <molecule id="Q9N2Z7-3"/>
    <property type="nucleotide sequence ID" value="NM_001306342.3"/>
</dbReference>
<dbReference type="RefSeq" id="NP_001293272.1">
    <molecule id="Q9N2Z7-4"/>
    <property type="nucleotide sequence ID" value="NM_001306343.3"/>
</dbReference>
<dbReference type="RefSeq" id="NP_740775.1">
    <molecule id="Q9N2Z7-1"/>
    <property type="nucleotide sequence ID" value="NM_170794.7"/>
</dbReference>
<dbReference type="RefSeq" id="NP_740776.1">
    <molecule id="Q9N2Z7-2"/>
    <property type="nucleotide sequence ID" value="NM_171831.4"/>
</dbReference>
<dbReference type="SMR" id="Q9N2Z7"/>
<dbReference type="DIP" id="DIP-25758N"/>
<dbReference type="FunCoup" id="Q9N2Z7">
    <property type="interactions" value="2969"/>
</dbReference>
<dbReference type="IntAct" id="Q9N2Z7">
    <property type="interactions" value="40"/>
</dbReference>
<dbReference type="MINT" id="Q9N2Z7"/>
<dbReference type="STRING" id="6239.Y65B4BR.4a.1"/>
<dbReference type="PaxDb" id="6239-Y65B4BR.4a"/>
<dbReference type="PeptideAtlas" id="Q9N2Z7"/>
<dbReference type="EnsemblMetazoa" id="Y65B4BR.4a.1">
    <molecule id="Q9N2Z7-1"/>
    <property type="protein sequence ID" value="Y65B4BR.4a.1"/>
    <property type="gene ID" value="WBGene00007009"/>
</dbReference>
<dbReference type="EnsemblMetazoa" id="Y65B4BR.4b.1">
    <molecule id="Q9N2Z7-2"/>
    <property type="protein sequence ID" value="Y65B4BR.4b.1"/>
    <property type="gene ID" value="WBGene00007009"/>
</dbReference>
<dbReference type="EnsemblMetazoa" id="Y65B4BR.4c.1">
    <molecule id="Q9N2Z7-3"/>
    <property type="protein sequence ID" value="Y65B4BR.4c.1"/>
    <property type="gene ID" value="WBGene00007009"/>
</dbReference>
<dbReference type="EnsemblMetazoa" id="Y65B4BR.4d.1">
    <molecule id="Q9N2Z7-4"/>
    <property type="protein sequence ID" value="Y65B4BR.4d.1"/>
    <property type="gene ID" value="WBGene00007009"/>
</dbReference>
<dbReference type="GeneID" id="171647"/>
<dbReference type="KEGG" id="cel:CELE_Y65B4BR.4"/>
<dbReference type="UCSC" id="Y65B4BR.4b">
    <property type="organism name" value="c. elegans"/>
</dbReference>
<dbReference type="AGR" id="WB:WBGene00007009"/>
<dbReference type="CTD" id="171647"/>
<dbReference type="WormBase" id="Y65B4BR.4a">
    <molecule id="Q9N2Z7-1"/>
    <property type="protein sequence ID" value="CE31384"/>
    <property type="gene ID" value="WBGene00007009"/>
    <property type="gene designation" value="wwp-1"/>
</dbReference>
<dbReference type="WormBase" id="Y65B4BR.4b">
    <molecule id="Q9N2Z7-2"/>
    <property type="protein sequence ID" value="CE31385"/>
    <property type="gene ID" value="WBGene00007009"/>
    <property type="gene designation" value="wwp-1"/>
</dbReference>
<dbReference type="WormBase" id="Y65B4BR.4c">
    <molecule id="Q9N2Z7-3"/>
    <property type="protein sequence ID" value="CE49230"/>
    <property type="gene ID" value="WBGene00007009"/>
    <property type="gene designation" value="wwp-1"/>
</dbReference>
<dbReference type="WormBase" id="Y65B4BR.4d">
    <molecule id="Q9N2Z7-4"/>
    <property type="protein sequence ID" value="CE49306"/>
    <property type="gene ID" value="WBGene00007009"/>
    <property type="gene designation" value="wwp-1"/>
</dbReference>
<dbReference type="eggNOG" id="KOG0940">
    <property type="taxonomic scope" value="Eukaryota"/>
</dbReference>
<dbReference type="GeneTree" id="ENSGT00940000154635"/>
<dbReference type="HOGENOM" id="CLU_002173_0_0_1"/>
<dbReference type="InParanoid" id="Q9N2Z7"/>
<dbReference type="OMA" id="NMAIEMT"/>
<dbReference type="OrthoDB" id="423283at2759"/>
<dbReference type="PhylomeDB" id="Q9N2Z7"/>
<dbReference type="Reactome" id="R-CEL-1253288">
    <property type="pathway name" value="Downregulation of ERBB4 signaling"/>
</dbReference>
<dbReference type="Reactome" id="R-CEL-2672351">
    <property type="pathway name" value="Stimuli-sensing channels"/>
</dbReference>
<dbReference type="Reactome" id="R-CEL-8948751">
    <property type="pathway name" value="Regulation of PTEN stability and activity"/>
</dbReference>
<dbReference type="Reactome" id="R-CEL-9013406">
    <property type="pathway name" value="RHOQ GTPase cycle"/>
</dbReference>
<dbReference type="Reactome" id="R-CEL-9013420">
    <property type="pathway name" value="RHOU GTPase cycle"/>
</dbReference>
<dbReference type="Reactome" id="R-CEL-983168">
    <property type="pathway name" value="Antigen processing: Ubiquitination &amp; Proteasome degradation"/>
</dbReference>
<dbReference type="SignaLink" id="Q9N2Z7"/>
<dbReference type="UniPathway" id="UPA00143"/>
<dbReference type="PRO" id="PR:Q9N2Z7"/>
<dbReference type="Proteomes" id="UP000001940">
    <property type="component" value="Chromosome I"/>
</dbReference>
<dbReference type="Bgee" id="WBGene00007009">
    <property type="expression patterns" value="Expressed in embryo and 4 other cell types or tissues"/>
</dbReference>
<dbReference type="ExpressionAtlas" id="Q9N2Z7">
    <property type="expression patterns" value="baseline and differential"/>
</dbReference>
<dbReference type="GO" id="GO:0005737">
    <property type="term" value="C:cytoplasm"/>
    <property type="evidence" value="ECO:0000314"/>
    <property type="project" value="WormBase"/>
</dbReference>
<dbReference type="GO" id="GO:0061631">
    <property type="term" value="F:ubiquitin conjugating enzyme activity"/>
    <property type="evidence" value="ECO:0000314"/>
    <property type="project" value="WormBase"/>
</dbReference>
<dbReference type="GO" id="GO:0061630">
    <property type="term" value="F:ubiquitin protein ligase activity"/>
    <property type="evidence" value="ECO:0000318"/>
    <property type="project" value="GO_Central"/>
</dbReference>
<dbReference type="GO" id="GO:0050829">
    <property type="term" value="P:defense response to Gram-negative bacterium"/>
    <property type="evidence" value="ECO:0000315"/>
    <property type="project" value="UniProtKB"/>
</dbReference>
<dbReference type="GO" id="GO:0050830">
    <property type="term" value="P:defense response to Gram-positive bacterium"/>
    <property type="evidence" value="ECO:0000315"/>
    <property type="project" value="UniProtKB"/>
</dbReference>
<dbReference type="GO" id="GO:0008340">
    <property type="term" value="P:determination of adult lifespan"/>
    <property type="evidence" value="ECO:0000315"/>
    <property type="project" value="UniProtKB"/>
</dbReference>
<dbReference type="GO" id="GO:0043161">
    <property type="term" value="P:proteasome-mediated ubiquitin-dependent protein catabolic process"/>
    <property type="evidence" value="ECO:0000318"/>
    <property type="project" value="GO_Central"/>
</dbReference>
<dbReference type="GO" id="GO:0016567">
    <property type="term" value="P:protein ubiquitination"/>
    <property type="evidence" value="ECO:0000314"/>
    <property type="project" value="WormBase"/>
</dbReference>
<dbReference type="GO" id="GO:0042176">
    <property type="term" value="P:regulation of protein catabolic process"/>
    <property type="evidence" value="ECO:0000315"/>
    <property type="project" value="WormBase"/>
</dbReference>
<dbReference type="CDD" id="cd00078">
    <property type="entry name" value="HECTc"/>
    <property type="match status" value="1"/>
</dbReference>
<dbReference type="CDD" id="cd00201">
    <property type="entry name" value="WW"/>
    <property type="match status" value="4"/>
</dbReference>
<dbReference type="FunFam" id="2.20.70.10:FF:000005">
    <property type="entry name" value="E3 ubiquitin-protein ligase"/>
    <property type="match status" value="1"/>
</dbReference>
<dbReference type="FunFam" id="2.20.70.10:FF:000068">
    <property type="entry name" value="E3 ubiquitin-protein ligase"/>
    <property type="match status" value="1"/>
</dbReference>
<dbReference type="FunFam" id="2.20.70.10:FF:000084">
    <property type="entry name" value="E3 ubiquitin-protein ligase"/>
    <property type="match status" value="1"/>
</dbReference>
<dbReference type="FunFam" id="2.60.40.150:FF:000371">
    <property type="entry name" value="E3 ubiquitin-protein ligase"/>
    <property type="match status" value="1"/>
</dbReference>
<dbReference type="FunFam" id="3.30.2160.10:FF:000003">
    <property type="entry name" value="E3 ubiquitin-protein ligase"/>
    <property type="match status" value="1"/>
</dbReference>
<dbReference type="FunFam" id="3.90.1750.10:FF:000002">
    <property type="entry name" value="E3 ubiquitin-protein ligase"/>
    <property type="match status" value="1"/>
</dbReference>
<dbReference type="FunFam" id="3.30.2410.10:FF:000002">
    <property type="entry name" value="E3 ubiquitin-protein ligase HECW2"/>
    <property type="match status" value="1"/>
</dbReference>
<dbReference type="Gene3D" id="2.20.70.10">
    <property type="match status" value="3"/>
</dbReference>
<dbReference type="Gene3D" id="2.60.40.150">
    <property type="entry name" value="C2 domain"/>
    <property type="match status" value="1"/>
</dbReference>
<dbReference type="Gene3D" id="3.30.2160.10">
    <property type="entry name" value="Hect, E3 ligase catalytic domain"/>
    <property type="match status" value="1"/>
</dbReference>
<dbReference type="Gene3D" id="3.30.2410.10">
    <property type="entry name" value="Hect, E3 ligase catalytic domain"/>
    <property type="match status" value="1"/>
</dbReference>
<dbReference type="Gene3D" id="3.90.1750.10">
    <property type="entry name" value="Hect, E3 ligase catalytic domains"/>
    <property type="match status" value="1"/>
</dbReference>
<dbReference type="InterPro" id="IPR000008">
    <property type="entry name" value="C2_dom"/>
</dbReference>
<dbReference type="InterPro" id="IPR035892">
    <property type="entry name" value="C2_domain_sf"/>
</dbReference>
<dbReference type="InterPro" id="IPR024928">
    <property type="entry name" value="E3_ub_ligase_SMURF1"/>
</dbReference>
<dbReference type="InterPro" id="IPR050409">
    <property type="entry name" value="E3_ubiq-protein_ligase"/>
</dbReference>
<dbReference type="InterPro" id="IPR000569">
    <property type="entry name" value="HECT_dom"/>
</dbReference>
<dbReference type="InterPro" id="IPR035983">
    <property type="entry name" value="Hect_E3_ubiquitin_ligase"/>
</dbReference>
<dbReference type="InterPro" id="IPR001202">
    <property type="entry name" value="WW_dom"/>
</dbReference>
<dbReference type="InterPro" id="IPR036020">
    <property type="entry name" value="WW_dom_sf"/>
</dbReference>
<dbReference type="PANTHER" id="PTHR11254:SF429">
    <property type="entry name" value="E3 UBIQUITIN-PROTEIN LIGASE SU(DX)"/>
    <property type="match status" value="1"/>
</dbReference>
<dbReference type="PANTHER" id="PTHR11254">
    <property type="entry name" value="HECT DOMAIN UBIQUITIN-PROTEIN LIGASE"/>
    <property type="match status" value="1"/>
</dbReference>
<dbReference type="Pfam" id="PF00168">
    <property type="entry name" value="C2"/>
    <property type="match status" value="1"/>
</dbReference>
<dbReference type="Pfam" id="PF00632">
    <property type="entry name" value="HECT"/>
    <property type="match status" value="1"/>
</dbReference>
<dbReference type="Pfam" id="PF00397">
    <property type="entry name" value="WW"/>
    <property type="match status" value="4"/>
</dbReference>
<dbReference type="PIRSF" id="PIRSF001569">
    <property type="entry name" value="E3_ub_ligase_SMURF1"/>
    <property type="match status" value="1"/>
</dbReference>
<dbReference type="SMART" id="SM00239">
    <property type="entry name" value="C2"/>
    <property type="match status" value="1"/>
</dbReference>
<dbReference type="SMART" id="SM00119">
    <property type="entry name" value="HECTc"/>
    <property type="match status" value="1"/>
</dbReference>
<dbReference type="SMART" id="SM00456">
    <property type="entry name" value="WW"/>
    <property type="match status" value="4"/>
</dbReference>
<dbReference type="SUPFAM" id="SSF49562">
    <property type="entry name" value="C2 domain (Calcium/lipid-binding domain, CaLB)"/>
    <property type="match status" value="1"/>
</dbReference>
<dbReference type="SUPFAM" id="SSF56204">
    <property type="entry name" value="Hect, E3 ligase catalytic domain"/>
    <property type="match status" value="1"/>
</dbReference>
<dbReference type="SUPFAM" id="SSF51045">
    <property type="entry name" value="WW domain"/>
    <property type="match status" value="4"/>
</dbReference>
<dbReference type="PROSITE" id="PS50004">
    <property type="entry name" value="C2"/>
    <property type="match status" value="1"/>
</dbReference>
<dbReference type="PROSITE" id="PS50237">
    <property type="entry name" value="HECT"/>
    <property type="match status" value="1"/>
</dbReference>
<dbReference type="PROSITE" id="PS01159">
    <property type="entry name" value="WW_DOMAIN_1"/>
    <property type="match status" value="4"/>
</dbReference>
<dbReference type="PROSITE" id="PS50020">
    <property type="entry name" value="WW_DOMAIN_2"/>
    <property type="match status" value="4"/>
</dbReference>
<evidence type="ECO:0000255" key="1">
    <source>
        <dbReference type="PIRNR" id="PIRNR001569"/>
    </source>
</evidence>
<evidence type="ECO:0000255" key="2">
    <source>
        <dbReference type="PROSITE-ProRule" id="PRU00041"/>
    </source>
</evidence>
<evidence type="ECO:0000255" key="3">
    <source>
        <dbReference type="PROSITE-ProRule" id="PRU00104"/>
    </source>
</evidence>
<evidence type="ECO:0000255" key="4">
    <source>
        <dbReference type="PROSITE-ProRule" id="PRU00224"/>
    </source>
</evidence>
<evidence type="ECO:0000256" key="5">
    <source>
        <dbReference type="SAM" id="MobiDB-lite"/>
    </source>
</evidence>
<evidence type="ECO:0000269" key="6">
    <source>
    </source>
</evidence>
<evidence type="ECO:0000269" key="7">
    <source>
    </source>
</evidence>
<evidence type="ECO:0000269" key="8">
    <source>
    </source>
</evidence>
<evidence type="ECO:0000305" key="9"/>
<evidence type="ECO:0000312" key="10">
    <source>
        <dbReference type="Proteomes" id="UP000001940"/>
    </source>
</evidence>
<evidence type="ECO:0000312" key="11">
    <source>
        <dbReference type="WormBase" id="Y65B4BR.4a"/>
    </source>
</evidence>
<evidence type="ECO:0000312" key="12">
    <source>
        <dbReference type="WormBase" id="Y65B4BR.4b"/>
    </source>
</evidence>
<evidence type="ECO:0000312" key="13">
    <source>
        <dbReference type="WormBase" id="Y65B4BR.4c"/>
    </source>
</evidence>
<evidence type="ECO:0000312" key="14">
    <source>
        <dbReference type="WormBase" id="Y65B4BR.4d"/>
    </source>
</evidence>
<name>WWP1_CAEEL</name>
<organism evidence="10">
    <name type="scientific">Caenorhabditis elegans</name>
    <dbReference type="NCBI Taxonomy" id="6239"/>
    <lineage>
        <taxon>Eukaryota</taxon>
        <taxon>Metazoa</taxon>
        <taxon>Ecdysozoa</taxon>
        <taxon>Nematoda</taxon>
        <taxon>Chromadorea</taxon>
        <taxon>Rhabditida</taxon>
        <taxon>Rhabditina</taxon>
        <taxon>Rhabditomorpha</taxon>
        <taxon>Rhabditoidea</taxon>
        <taxon>Rhabditidae</taxon>
        <taxon>Peloderinae</taxon>
        <taxon>Caenorhabditis</taxon>
    </lineage>
</organism>
<reference evidence="10" key="1">
    <citation type="journal article" date="1998" name="Science">
        <title>Genome sequence of the nematode C. elegans: a platform for investigating biology.</title>
        <authorList>
            <consortium name="The C. elegans sequencing consortium"/>
        </authorList>
    </citation>
    <scope>NUCLEOTIDE SEQUENCE [LARGE SCALE GENOMIC DNA]</scope>
    <source>
        <strain evidence="10">Bristol N2</strain>
    </source>
</reference>
<reference evidence="9" key="2">
    <citation type="journal article" date="2009" name="Nature">
        <title>A conserved ubiquitination pathway determines longevity in response to diet restriction.</title>
        <authorList>
            <person name="Carrano A.C."/>
            <person name="Liu Z."/>
            <person name="Dillin A."/>
            <person name="Hunter T."/>
        </authorList>
    </citation>
    <scope>FUNCTION</scope>
    <scope>CATALYTIC ACTIVITY</scope>
    <scope>PATHWAY</scope>
    <scope>INTERACTION WITH UBC-18</scope>
    <scope>TISSUE SPECIFICITY</scope>
    <scope>DISRUPTION PHENOTYPE</scope>
    <scope>MUTAGENESIS OF CYS-762</scope>
</reference>
<reference evidence="9" key="3">
    <citation type="journal article" date="2010" name="PLoS ONE">
        <title>WWP-1 is a novel modulator of the DAF-2 insulin-like signaling network involved in pore-forming toxin cellular defenses in Caenorhabditis elegans.</title>
        <authorList>
            <person name="Chen C.S."/>
            <person name="Bellier A."/>
            <person name="Kao C.Y."/>
            <person name="Yang Y.L."/>
            <person name="Chen H.D."/>
            <person name="Los F.C."/>
            <person name="Aroian R.V."/>
        </authorList>
    </citation>
    <scope>FUNCTION</scope>
    <scope>DISRUPTION PHENOTYPE</scope>
</reference>
<reference evidence="9" key="4">
    <citation type="journal article" date="2014" name="Nat. Commun.">
        <title>A Krueppel-like factor downstream of the E3 ligase WWP-1 mediates dietary-restriction-induced longevity in Caenorhabditis elegans.</title>
        <authorList>
            <person name="Carrano A.C."/>
            <person name="Dillin A."/>
            <person name="Hunter T."/>
        </authorList>
    </citation>
    <scope>FUNCTION</scope>
    <scope>INTERACTION WITH KLF-1</scope>
    <scope>DISRUPTION PHENOTYPE</scope>
    <scope>MUTAGENESIS OF CYS-762</scope>
</reference>
<feature type="chain" id="PRO_0000452646" description="E3 ubiquitin-protein ligase wwp-1">
    <location>
        <begin position="1"/>
        <end position="794"/>
    </location>
</feature>
<feature type="domain" description="C2" evidence="2">
    <location>
        <begin position="10"/>
        <end position="124"/>
    </location>
</feature>
<feature type="domain" description="WW 1" evidence="4">
    <location>
        <begin position="219"/>
        <end position="252"/>
    </location>
</feature>
<feature type="domain" description="WW 2" evidence="4">
    <location>
        <begin position="253"/>
        <end position="286"/>
    </location>
</feature>
<feature type="domain" description="WW 3" evidence="4">
    <location>
        <begin position="324"/>
        <end position="358"/>
    </location>
</feature>
<feature type="domain" description="WW 4" evidence="4">
    <location>
        <begin position="366"/>
        <end position="399"/>
    </location>
</feature>
<feature type="domain" description="HECT" evidence="3">
    <location>
        <begin position="460"/>
        <end position="794"/>
    </location>
</feature>
<feature type="region of interest" description="Disordered" evidence="5">
    <location>
        <begin position="1"/>
        <end position="31"/>
    </location>
</feature>
<feature type="region of interest" description="Disordered" evidence="5">
    <location>
        <begin position="155"/>
        <end position="198"/>
    </location>
</feature>
<feature type="compositionally biased region" description="Low complexity" evidence="5">
    <location>
        <begin position="1"/>
        <end position="16"/>
    </location>
</feature>
<feature type="compositionally biased region" description="Polar residues" evidence="5">
    <location>
        <begin position="17"/>
        <end position="27"/>
    </location>
</feature>
<feature type="compositionally biased region" description="Low complexity" evidence="5">
    <location>
        <begin position="161"/>
        <end position="186"/>
    </location>
</feature>
<feature type="active site" description="Glycyl thioester intermediate" evidence="3">
    <location>
        <position position="762"/>
    </location>
</feature>
<feature type="splice variant" id="VSP_061029" description="In isoform c and isoform d.">
    <location>
        <begin position="1"/>
        <end position="287"/>
    </location>
</feature>
<feature type="splice variant" id="VSP_061030" description="In isoform b and isoform d.">
    <location>
        <begin position="361"/>
        <end position="362"/>
    </location>
</feature>
<feature type="mutagenesis site" description="Abolishes ubiquitin ligation activity; prevents ubiquitination of Kruppel-like factor klf-1." evidence="6 8">
    <original>C</original>
    <variation>A</variation>
    <location>
        <position position="762"/>
    </location>
</feature>
<accession>Q9N2Z7</accession>
<accession>Q95XU3</accession>
<accession>V6CJJ8</accession>
<accession>V6CLY4</accession>
<protein>
    <recommendedName>
        <fullName evidence="1 9">E3 ubiquitin-protein ligase wwp-1</fullName>
        <ecNumber evidence="1">2.3.2.26</ecNumber>
    </recommendedName>
</protein>
<sequence length="794" mass="90922">MARNEPSSQQPSSSGSNGTPAQQNGSAKPSKVTVKVVNASFTKAADCYVEITSDTSSAAPKKTTVKKKTMAPEWNEHLNVHANESSTISFRLLQKAKLFDDTCLGMAKLKLSSLTRNENGEFKNDINNISLLAKDSSKIGTLNIIFSGYPERKRRSAGVRAETAASASSEASTSNGVATSSSARRPATAKRDTLAAPTSTAAAAAAATAGGTPAAGAEEQLPDGWEMRFDQYGRKYYVDHTTKSTTWERPSTQPLPQGWEMRRDPRGRVYYVDHNTRTTTWQRPTADMLEAHEQWQSGRDQAMLQWEQRFLLQQNNFSADDPLGPLPEGWEKRQDPNTSRMYFVNHVNRTTQWEDPRTQGFRGSDQPLPDGWEMRFTEQGVPFFIDHQSKTTTYNDPRTGKPVGPLGVVGVQMAMEKSFRWKIAQFRYLCLSNSVPNHVKITVSRNNVFEDSFQEIMRKNAVDLRRRLYIQFRGEEGLDYGGVAREWFFLLSHEVLNPMYCLFMYAGNNNYSLQINPASFVNPDHLKYFEYIGRFIAMALFHGKFIYSGFTMPFYKKMLNKKIVLKDIEQVDSEIYNSLMWIKDNNIDECDMELYFVADYELLGELKTYELKEGGTEIAVTEENKLEYIELLVEWRFNRGVEQQTKAFFTGFNSVFPLEWMQYFDERELELLLCGMQDVDVDDWQRNTVYRHYAPQSKQVTWFWQWVRSLDQEKRARLLQFVTGTCRVPVGGFSELMGSTGPQLFCIERVGKENWLPRSHTCFNRLDLPPYRSYDQLVEKLSMAIEMTEGFGNE</sequence>
<keyword id="KW-0025">Alternative splicing</keyword>
<keyword id="KW-1185">Reference proteome</keyword>
<keyword id="KW-0677">Repeat</keyword>
<keyword id="KW-0808">Transferase</keyword>
<keyword id="KW-0833">Ubl conjugation pathway</keyword>
<proteinExistence type="evidence at protein level"/>
<gene>
    <name evidence="11" type="primary">wwp-1</name>
    <name evidence="11" type="ORF">Y65B4BR.4</name>
</gene>
<comment type="function">
    <text evidence="6 7 8">E3 ubiquitin-protein ligase which accepts ubiquitin from an E2 ubiquitin-conjugating enzyme in the form of a thioester and then directly transfers the ubiquitin to targeted substrates (PubMed:19553937, PubMed:24805825). Ubiquitinates klf-1 (PubMed:24805825). Required for diet restriction-mediated lifespan extension, acting in concert with Kruppel-like factor klf-1 in the intestine to perhaps modulate genes involved in lipid metabolism (PubMed:19553937, PubMed:24805825). Probably acting downstream of the Insulin/IGF-1-like signaling (IIS) mediated pathway, plays a role in the immune response to infection by the Gram-negative bacterium P.aeruginosa, at least partly in response to bacterial pore-forming toxins (PubMed:20209166).</text>
</comment>
<comment type="catalytic activity">
    <reaction evidence="1 6">
        <text>S-ubiquitinyl-[E2 ubiquitin-conjugating enzyme]-L-cysteine + [acceptor protein]-L-lysine = [E2 ubiquitin-conjugating enzyme]-L-cysteine + N(6)-ubiquitinyl-[acceptor protein]-L-lysine.</text>
        <dbReference type="EC" id="2.3.2.26"/>
    </reaction>
</comment>
<comment type="pathway">
    <text evidence="1 6">Protein modification; protein ubiquitination.</text>
</comment>
<comment type="subunit">
    <text evidence="6 8">Interacts (via WW domains) with Kruppel-like factor klf-1 (PubMed:24805825). Interacts with ubiquitin-conjugating enzyme E2 ubc-18 (PubMed:19553937).</text>
</comment>
<comment type="interaction">
    <interactant intactId="EBI-317369">
        <id>Q9N2Z7</id>
    </interactant>
    <interactant intactId="EBI-330020">
        <id>Q9XXI4</id>
        <label>arrd-7</label>
    </interactant>
    <organismsDiffer>false</organismsDiffer>
    <experiments>3</experiments>
</comment>
<comment type="interaction">
    <interactant intactId="EBI-317369">
        <id>Q9N2Z7</id>
    </interactant>
    <interactant intactId="EBI-317945">
        <id>P39055</id>
        <label>dyn-1</label>
    </interactant>
    <organismsDiffer>false</organismsDiffer>
    <experiments>3</experiments>
</comment>
<comment type="interaction">
    <interactant intactId="EBI-317369">
        <id>Q9N2Z7</id>
    </interactant>
    <interactant intactId="EBI-2315916">
        <id>G5ED33</id>
        <label>eps-8</label>
    </interactant>
    <organismsDiffer>false</organismsDiffer>
    <experiments>3</experiments>
</comment>
<comment type="interaction">
    <interactant intactId="EBI-317369">
        <id>Q9N2Z7</id>
    </interactant>
    <interactant intactId="EBI-325980">
        <id>Q21633</id>
        <label>ubc-18</label>
    </interactant>
    <organismsDiffer>false</organismsDiffer>
    <experiments>3</experiments>
</comment>
<comment type="interaction">
    <interactant intactId="EBI-317369">
        <id>Q9N2Z7</id>
    </interactant>
    <interactant intactId="EBI-318634">
        <id>Q18966</id>
        <label>wbp-2</label>
    </interactant>
    <organismsDiffer>false</organismsDiffer>
    <experiments>3</experiments>
</comment>
<comment type="alternative products">
    <event type="alternative splicing"/>
    <isoform>
        <id>Q9N2Z7-1</id>
        <name evidence="11">a</name>
        <sequence type="displayed"/>
    </isoform>
    <isoform>
        <id>Q9N2Z7-2</id>
        <name evidence="12">b</name>
        <sequence type="described" ref="VSP_061030"/>
    </isoform>
    <isoform>
        <id>Q9N2Z7-3</id>
        <name evidence="13">c</name>
        <sequence type="described" ref="VSP_061029"/>
    </isoform>
    <isoform>
        <id>Q9N2Z7-4</id>
        <name evidence="14">d</name>
        <sequence type="described" ref="VSP_061029 VSP_061030"/>
    </isoform>
</comment>
<comment type="tissue specificity">
    <text evidence="6">Expressed in neurons localized in the head and tail of adults.</text>
</comment>
<comment type="disruption phenotype">
    <text evidence="6 7 8">RNAi-mediated knockdown increases sensitivity to paraquat, and reduces lifespan at 25 degrees Celsius, but not at 20 degrees Celsius (PubMed:19553937). Causes reduced ability of dietary restriction to extend lifespan (PubMed:19553937, PubMed:24805825). Abolishes lifespan extension completely on an eat-2 mutant background, independent of whether knockdown is ubiquitous, or targeted only to the intestine (PubMed:19553937, PubMed:24805825). Does not suppress extended lifespans of isp-1 or daf-2 mutants (PubMed:19553937). Hypersensitive to bacterial pore-forming toxin (PubMed:20209166).</text>
</comment>